<protein>
    <recommendedName>
        <fullName>Temporin-GH</fullName>
    </recommendedName>
    <alternativeName>
        <fullName>AMP-5</fullName>
    </alternativeName>
</protein>
<dbReference type="GO" id="GO:0005576">
    <property type="term" value="C:extracellular region"/>
    <property type="evidence" value="ECO:0007669"/>
    <property type="project" value="UniProtKB-SubCell"/>
</dbReference>
<dbReference type="GO" id="GO:0042742">
    <property type="term" value="P:defense response to bacterium"/>
    <property type="evidence" value="ECO:0007669"/>
    <property type="project" value="UniProtKB-KW"/>
</dbReference>
<comment type="function">
    <text evidence="1">Antimicrobial peptide. Active against the Gram-positive bacteria S.aureus FDA209P (MIC=44.3 ug/ml) and B.subtilis ATCC 6633 (MIC&gt;64 ug/ml), but not active against the Gram-negative bacterium E.coli or the fungus C.albicans.</text>
</comment>
<comment type="subcellular location">
    <subcellularLocation>
        <location evidence="1">Secreted</location>
    </subcellularLocation>
</comment>
<comment type="tissue specificity">
    <text evidence="1">Expressed by the skin glands.</text>
</comment>
<comment type="mass spectrometry"/>
<comment type="similarity">
    <text evidence="2">Belongs to the frog skin active peptide (FSAP) family. Temporin subfamily.</text>
</comment>
<feature type="peptide" id="PRO_0000271188" description="Temporin-GH" evidence="1">
    <location>
        <begin position="1"/>
        <end position="13"/>
    </location>
</feature>
<feature type="modified residue" description="Leucine amide" evidence="1">
    <location>
        <position position="13"/>
    </location>
</feature>
<reference evidence="2" key="1">
    <citation type="journal article" date="2006" name="Peptides">
        <title>Purification and characterization of novel antimicrobial peptides from the skin secretion of Hylarana guentheri.</title>
        <authorList>
            <person name="Zhou J."/>
            <person name="McClean S."/>
            <person name="Thompson A."/>
            <person name="Zhang Y."/>
            <person name="Shaw C."/>
            <person name="Rao P."/>
            <person name="Bjourson A.J."/>
        </authorList>
    </citation>
    <scope>PROTEIN SEQUENCE</scope>
    <scope>FUNCTION</scope>
    <scope>SUBCELLULAR LOCATION</scope>
    <scope>TISSUE SPECIFICITY</scope>
    <scope>MASS SPECTROMETRY</scope>
    <scope>AMIDATION AT LEU-13</scope>
    <source>
        <tissue evidence="1">Skin secretion</tissue>
    </source>
</reference>
<proteinExistence type="evidence at protein level"/>
<keyword id="KW-0027">Amidation</keyword>
<keyword id="KW-0878">Amphibian defense peptide</keyword>
<keyword id="KW-0044">Antibiotic</keyword>
<keyword id="KW-0929">Antimicrobial</keyword>
<keyword id="KW-0903">Direct protein sequencing</keyword>
<keyword id="KW-0964">Secreted</keyword>
<sequence>FLPLLFGAISHLL</sequence>
<accession>P84858</accession>
<evidence type="ECO:0000269" key="1">
    <source>
    </source>
</evidence>
<evidence type="ECO:0000305" key="2"/>
<name>TPH_SYLGU</name>
<organism>
    <name type="scientific">Sylvirana guentheri</name>
    <name type="common">Gunther's frog</name>
    <name type="synonym">Rana guentheri</name>
    <dbReference type="NCBI Taxonomy" id="110109"/>
    <lineage>
        <taxon>Eukaryota</taxon>
        <taxon>Metazoa</taxon>
        <taxon>Chordata</taxon>
        <taxon>Craniata</taxon>
        <taxon>Vertebrata</taxon>
        <taxon>Euteleostomi</taxon>
        <taxon>Amphibia</taxon>
        <taxon>Batrachia</taxon>
        <taxon>Anura</taxon>
        <taxon>Neobatrachia</taxon>
        <taxon>Ranoidea</taxon>
        <taxon>Ranidae</taxon>
        <taxon>Sylvirana</taxon>
    </lineage>
</organism>